<comment type="similarity">
    <text evidence="1">Belongs to the 2H phosphoesterase superfamily. YjcG family.</text>
</comment>
<proteinExistence type="inferred from homology"/>
<keyword id="KW-0378">Hydrolase</keyword>
<dbReference type="EC" id="3.1.-.-" evidence="1"/>
<dbReference type="EMBL" id="CP001176">
    <property type="protein sequence ID" value="ACK63954.1"/>
    <property type="molecule type" value="Genomic_DNA"/>
</dbReference>
<dbReference type="RefSeq" id="WP_000765863.1">
    <property type="nucleotide sequence ID" value="NZ_VEHB01000003.1"/>
</dbReference>
<dbReference type="SMR" id="B7HGY8"/>
<dbReference type="KEGG" id="bcb:BCB4264_A1283"/>
<dbReference type="HOGENOM" id="CLU_132020_0_0_9"/>
<dbReference type="Proteomes" id="UP000007096">
    <property type="component" value="Chromosome"/>
</dbReference>
<dbReference type="GO" id="GO:0016788">
    <property type="term" value="F:hydrolase activity, acting on ester bonds"/>
    <property type="evidence" value="ECO:0007669"/>
    <property type="project" value="UniProtKB-UniRule"/>
</dbReference>
<dbReference type="Gene3D" id="3.90.1140.10">
    <property type="entry name" value="Cyclic phosphodiesterase"/>
    <property type="match status" value="1"/>
</dbReference>
<dbReference type="HAMAP" id="MF_01444">
    <property type="entry name" value="2H_phosphoesterase_YjcG"/>
    <property type="match status" value="1"/>
</dbReference>
<dbReference type="InterPro" id="IPR050580">
    <property type="entry name" value="2H_phosphoesterase_YjcG-like"/>
</dbReference>
<dbReference type="InterPro" id="IPR009097">
    <property type="entry name" value="Cyclic_Pdiesterase"/>
</dbReference>
<dbReference type="InterPro" id="IPR022932">
    <property type="entry name" value="YjcG"/>
</dbReference>
<dbReference type="NCBIfam" id="NF010223">
    <property type="entry name" value="PRK13679.1"/>
    <property type="match status" value="1"/>
</dbReference>
<dbReference type="PANTHER" id="PTHR40037:SF1">
    <property type="entry name" value="PHOSPHOESTERASE SAOUHSC_00951-RELATED"/>
    <property type="match status" value="1"/>
</dbReference>
<dbReference type="PANTHER" id="PTHR40037">
    <property type="entry name" value="PHOSPHOESTERASE YJCG-RELATED"/>
    <property type="match status" value="1"/>
</dbReference>
<dbReference type="Pfam" id="PF13563">
    <property type="entry name" value="2_5_RNA_ligase2"/>
    <property type="match status" value="1"/>
</dbReference>
<dbReference type="SUPFAM" id="SSF55144">
    <property type="entry name" value="LigT-like"/>
    <property type="match status" value="1"/>
</dbReference>
<name>Y1283_BACC4</name>
<accession>B7HGY8</accession>
<feature type="chain" id="PRO_1000145934" description="Putative phosphoesterase BCB4264_A1283">
    <location>
        <begin position="1"/>
        <end position="172"/>
    </location>
</feature>
<feature type="short sequence motif" description="HXTX 1" evidence="1">
    <location>
        <begin position="34"/>
        <end position="37"/>
    </location>
</feature>
<feature type="short sequence motif" description="HXTX 2" evidence="1">
    <location>
        <begin position="115"/>
        <end position="118"/>
    </location>
</feature>
<feature type="active site" description="Proton donor" evidence="1">
    <location>
        <position position="34"/>
    </location>
</feature>
<feature type="active site" description="Proton acceptor" evidence="1">
    <location>
        <position position="115"/>
    </location>
</feature>
<gene>
    <name type="ordered locus">BCB4264_A1283</name>
</gene>
<organism>
    <name type="scientific">Bacillus cereus (strain B4264)</name>
    <dbReference type="NCBI Taxonomy" id="405532"/>
    <lineage>
        <taxon>Bacteria</taxon>
        <taxon>Bacillati</taxon>
        <taxon>Bacillota</taxon>
        <taxon>Bacilli</taxon>
        <taxon>Bacillales</taxon>
        <taxon>Bacillaceae</taxon>
        <taxon>Bacillus</taxon>
        <taxon>Bacillus cereus group</taxon>
    </lineage>
</organism>
<evidence type="ECO:0000255" key="1">
    <source>
        <dbReference type="HAMAP-Rule" id="MF_01444"/>
    </source>
</evidence>
<reference key="1">
    <citation type="submission" date="2008-10" db="EMBL/GenBank/DDBJ databases">
        <title>Genome sequence of Bacillus cereus B4264.</title>
        <authorList>
            <person name="Dodson R.J."/>
            <person name="Durkin A.S."/>
            <person name="Rosovitz M.J."/>
            <person name="Rasko D.A."/>
            <person name="Hoffmaster A."/>
            <person name="Ravel J."/>
            <person name="Sutton G."/>
        </authorList>
    </citation>
    <scope>NUCLEOTIDE SEQUENCE [LARGE SCALE GENOMIC DNA]</scope>
    <source>
        <strain>B4264</strain>
    </source>
</reference>
<sequence>MKLGIVIFPSKMIQDKANGLRKRYDPHYALVPPHITLKTPFEAQDEQLESIVNELHTIASKTNPFTLHVGKVGSFAPVNNVLYFKVEKTPELTFLNEEMHSGLFTQEREYAFVPHLTIGQGLSDAEHADVLGRLRMKDFYYEQPIDRFHLLYQLENGTWTVHETFRLGKGNN</sequence>
<protein>
    <recommendedName>
        <fullName evidence="1">Putative phosphoesterase BCB4264_A1283</fullName>
        <ecNumber evidence="1">3.1.-.-</ecNumber>
    </recommendedName>
</protein>